<sequence>MKVHKGDTVLVISGKDKGAKGKVLVAYPDRNKVLVEGVNRIKKHTAVSANERGASSGGIVTQEAPIHVSNVMVVDSDGKPTRVGYRIDDETGKKVRIAKTNGKDI</sequence>
<evidence type="ECO:0000255" key="1">
    <source>
        <dbReference type="HAMAP-Rule" id="MF_01326"/>
    </source>
</evidence>
<evidence type="ECO:0000305" key="2"/>
<evidence type="ECO:0007829" key="3">
    <source>
        <dbReference type="PDB" id="5O60"/>
    </source>
</evidence>
<evidence type="ECO:0007829" key="4">
    <source>
        <dbReference type="PDB" id="5XYM"/>
    </source>
</evidence>
<evidence type="ECO:0007829" key="5">
    <source>
        <dbReference type="PDB" id="5ZET"/>
    </source>
</evidence>
<feature type="chain" id="PRO_1000052259" description="Large ribosomal subunit protein uL24">
    <location>
        <begin position="1"/>
        <end position="105"/>
    </location>
</feature>
<feature type="strand" evidence="4">
    <location>
        <begin position="8"/>
        <end position="11"/>
    </location>
</feature>
<feature type="strand" evidence="4">
    <location>
        <begin position="13"/>
        <end position="16"/>
    </location>
</feature>
<feature type="strand" evidence="4">
    <location>
        <begin position="20"/>
        <end position="27"/>
    </location>
</feature>
<feature type="turn" evidence="4">
    <location>
        <begin position="28"/>
        <end position="31"/>
    </location>
</feature>
<feature type="strand" evidence="4">
    <location>
        <begin position="32"/>
        <end position="35"/>
    </location>
</feature>
<feature type="strand" evidence="4">
    <location>
        <begin position="38"/>
        <end position="41"/>
    </location>
</feature>
<feature type="strand" evidence="3">
    <location>
        <begin position="57"/>
        <end position="63"/>
    </location>
</feature>
<feature type="helix" evidence="4">
    <location>
        <begin position="68"/>
        <end position="70"/>
    </location>
</feature>
<feature type="strand" evidence="4">
    <location>
        <begin position="71"/>
        <end position="74"/>
    </location>
</feature>
<feature type="strand" evidence="5">
    <location>
        <begin position="76"/>
        <end position="78"/>
    </location>
</feature>
<feature type="strand" evidence="3">
    <location>
        <begin position="83"/>
        <end position="88"/>
    </location>
</feature>
<feature type="turn" evidence="3">
    <location>
        <begin position="89"/>
        <end position="92"/>
    </location>
</feature>
<feature type="strand" evidence="3">
    <location>
        <begin position="93"/>
        <end position="98"/>
    </location>
</feature>
<feature type="turn" evidence="4">
    <location>
        <begin position="99"/>
        <end position="101"/>
    </location>
</feature>
<comment type="function">
    <text evidence="1">One of two assembly initiator proteins, it binds directly to the 5'-end of the 23S rRNA, where it nucleates assembly of the 50S subunit.</text>
</comment>
<comment type="function">
    <text evidence="1">One of the proteins that surrounds the polypeptide exit tunnel on the outside of the subunit.</text>
</comment>
<comment type="subunit">
    <text evidence="1">Part of the 50S ribosomal subunit.</text>
</comment>
<comment type="similarity">
    <text evidence="1">Belongs to the universal ribosomal protein uL24 family.</text>
</comment>
<dbReference type="EMBL" id="CP000480">
    <property type="protein sequence ID" value="ABK73139.1"/>
    <property type="molecule type" value="Genomic_DNA"/>
</dbReference>
<dbReference type="EMBL" id="CP001663">
    <property type="protein sequence ID" value="AFP37903.1"/>
    <property type="molecule type" value="Genomic_DNA"/>
</dbReference>
<dbReference type="RefSeq" id="WP_003892853.1">
    <property type="nucleotide sequence ID" value="NZ_SIJM01000016.1"/>
</dbReference>
<dbReference type="RefSeq" id="YP_885848.1">
    <property type="nucleotide sequence ID" value="NC_008596.1"/>
</dbReference>
<dbReference type="PDB" id="5O60">
    <property type="method" value="EM"/>
    <property type="resolution" value="3.20 A"/>
    <property type="chains" value="V=1-105"/>
</dbReference>
<dbReference type="PDB" id="5O61">
    <property type="method" value="EM"/>
    <property type="resolution" value="3.31 A"/>
    <property type="chains" value="V=1-105"/>
</dbReference>
<dbReference type="PDB" id="5XYM">
    <property type="method" value="EM"/>
    <property type="resolution" value="3.08 A"/>
    <property type="chains" value="U=1-105"/>
</dbReference>
<dbReference type="PDB" id="5ZEB">
    <property type="method" value="EM"/>
    <property type="resolution" value="3.40 A"/>
    <property type="chains" value="V=1-105"/>
</dbReference>
<dbReference type="PDB" id="5ZEP">
    <property type="method" value="EM"/>
    <property type="resolution" value="3.40 A"/>
    <property type="chains" value="V=1-105"/>
</dbReference>
<dbReference type="PDB" id="5ZET">
    <property type="method" value="EM"/>
    <property type="resolution" value="3.20 A"/>
    <property type="chains" value="V=1-105"/>
</dbReference>
<dbReference type="PDB" id="6DZI">
    <property type="method" value="EM"/>
    <property type="resolution" value="3.46 A"/>
    <property type="chains" value="V=1-105"/>
</dbReference>
<dbReference type="PDB" id="6DZP">
    <property type="method" value="EM"/>
    <property type="resolution" value="3.42 A"/>
    <property type="chains" value="V=1-105"/>
</dbReference>
<dbReference type="PDB" id="7S0S">
    <property type="method" value="EM"/>
    <property type="resolution" value="3.05 A"/>
    <property type="chains" value="W=1-105"/>
</dbReference>
<dbReference type="PDB" id="7XAM">
    <property type="method" value="EM"/>
    <property type="resolution" value="2.80 A"/>
    <property type="chains" value="V=1-105"/>
</dbReference>
<dbReference type="PDB" id="7Y41">
    <property type="method" value="EM"/>
    <property type="resolution" value="4.10 A"/>
    <property type="chains" value="V=1-105"/>
</dbReference>
<dbReference type="PDB" id="8FR8">
    <property type="method" value="EM"/>
    <property type="resolution" value="2.76 A"/>
    <property type="chains" value="1=1-105"/>
</dbReference>
<dbReference type="PDB" id="8KAB">
    <property type="method" value="EM"/>
    <property type="resolution" value="3.30 A"/>
    <property type="chains" value="V=1-105"/>
</dbReference>
<dbReference type="PDB" id="8V9J">
    <property type="method" value="EM"/>
    <property type="resolution" value="3.10 A"/>
    <property type="chains" value="W=1-105"/>
</dbReference>
<dbReference type="PDB" id="8V9K">
    <property type="method" value="EM"/>
    <property type="resolution" value="3.10 A"/>
    <property type="chains" value="W=1-105"/>
</dbReference>
<dbReference type="PDB" id="8V9L">
    <property type="method" value="EM"/>
    <property type="resolution" value="3.00 A"/>
    <property type="chains" value="W=1-105"/>
</dbReference>
<dbReference type="PDB" id="8VIO">
    <property type="method" value="EM"/>
    <property type="resolution" value="3.26 A"/>
    <property type="chains" value="V=1-105"/>
</dbReference>
<dbReference type="PDB" id="8VK0">
    <property type="method" value="EM"/>
    <property type="resolution" value="3.14 A"/>
    <property type="chains" value="V=1-105"/>
</dbReference>
<dbReference type="PDB" id="8VK7">
    <property type="method" value="EM"/>
    <property type="resolution" value="3.09 A"/>
    <property type="chains" value="V=1-105"/>
</dbReference>
<dbReference type="PDB" id="8VKI">
    <property type="method" value="EM"/>
    <property type="resolution" value="2.96 A"/>
    <property type="chains" value="V=1-105"/>
</dbReference>
<dbReference type="PDB" id="8VKW">
    <property type="method" value="EM"/>
    <property type="resolution" value="3.44 A"/>
    <property type="chains" value="V=1-105"/>
</dbReference>
<dbReference type="PDB" id="8VR4">
    <property type="method" value="EM"/>
    <property type="resolution" value="2.80 A"/>
    <property type="chains" value="V=1-105"/>
</dbReference>
<dbReference type="PDB" id="8VR8">
    <property type="method" value="EM"/>
    <property type="resolution" value="3.25 A"/>
    <property type="chains" value="V=1-105"/>
</dbReference>
<dbReference type="PDB" id="8VRL">
    <property type="method" value="EM"/>
    <property type="resolution" value="3.33 A"/>
    <property type="chains" value="V=1-105"/>
</dbReference>
<dbReference type="PDB" id="8WHX">
    <property type="method" value="EM"/>
    <property type="resolution" value="2.80 A"/>
    <property type="chains" value="X=1-105"/>
</dbReference>
<dbReference type="PDB" id="8WHY">
    <property type="method" value="EM"/>
    <property type="resolution" value="2.70 A"/>
    <property type="chains" value="X=1-105"/>
</dbReference>
<dbReference type="PDB" id="8WI7">
    <property type="method" value="EM"/>
    <property type="resolution" value="3.50 A"/>
    <property type="chains" value="X=1-105"/>
</dbReference>
<dbReference type="PDB" id="8WI8">
    <property type="method" value="EM"/>
    <property type="resolution" value="2.70 A"/>
    <property type="chains" value="X=1-105"/>
</dbReference>
<dbReference type="PDB" id="8WIB">
    <property type="method" value="EM"/>
    <property type="resolution" value="3.50 A"/>
    <property type="chains" value="X=1-105"/>
</dbReference>
<dbReference type="PDB" id="8WIC">
    <property type="method" value="EM"/>
    <property type="resolution" value="3.50 A"/>
    <property type="chains" value="X=1-105"/>
</dbReference>
<dbReference type="PDB" id="8XZ3">
    <property type="method" value="EM"/>
    <property type="resolution" value="3.60 A"/>
    <property type="chains" value="V=1-105"/>
</dbReference>
<dbReference type="PDBsum" id="5O60"/>
<dbReference type="PDBsum" id="5O61"/>
<dbReference type="PDBsum" id="5XYM"/>
<dbReference type="PDBsum" id="5ZEB"/>
<dbReference type="PDBsum" id="5ZEP"/>
<dbReference type="PDBsum" id="5ZET"/>
<dbReference type="PDBsum" id="6DZI"/>
<dbReference type="PDBsum" id="6DZP"/>
<dbReference type="PDBsum" id="7S0S"/>
<dbReference type="PDBsum" id="7XAM"/>
<dbReference type="PDBsum" id="7Y41"/>
<dbReference type="PDBsum" id="8FR8"/>
<dbReference type="PDBsum" id="8KAB"/>
<dbReference type="PDBsum" id="8V9J"/>
<dbReference type="PDBsum" id="8V9K"/>
<dbReference type="PDBsum" id="8V9L"/>
<dbReference type="PDBsum" id="8VIO"/>
<dbReference type="PDBsum" id="8VK0"/>
<dbReference type="PDBsum" id="8VK7"/>
<dbReference type="PDBsum" id="8VKI"/>
<dbReference type="PDBsum" id="8VKW"/>
<dbReference type="PDBsum" id="8VR4"/>
<dbReference type="PDBsum" id="8VR8"/>
<dbReference type="PDBsum" id="8VRL"/>
<dbReference type="PDBsum" id="8WHX"/>
<dbReference type="PDBsum" id="8WHY"/>
<dbReference type="PDBsum" id="8WI7"/>
<dbReference type="PDBsum" id="8WI8"/>
<dbReference type="PDBsum" id="8WIB"/>
<dbReference type="PDBsum" id="8WIC"/>
<dbReference type="PDBsum" id="8XZ3"/>
<dbReference type="EMDB" id="EMD-29397"/>
<dbReference type="EMDB" id="EMD-33096"/>
<dbReference type="EMDB" id="EMD-33599"/>
<dbReference type="EMDB" id="EMD-37007"/>
<dbReference type="EMDB" id="EMD-3750"/>
<dbReference type="EMDB" id="EMD-3751"/>
<dbReference type="EMDB" id="EMD-37551"/>
<dbReference type="EMDB" id="EMD-37552"/>
<dbReference type="EMDB" id="EMD-37559"/>
<dbReference type="EMDB" id="EMD-37560"/>
<dbReference type="EMDB" id="EMD-37562"/>
<dbReference type="EMDB" id="EMD-37563"/>
<dbReference type="EMDB" id="EMD-38788"/>
<dbReference type="EMDB" id="EMD-43074"/>
<dbReference type="EMDB" id="EMD-43075"/>
<dbReference type="EMDB" id="EMD-43076"/>
<dbReference type="EMDB" id="EMD-43267"/>
<dbReference type="EMDB" id="EMD-43294"/>
<dbReference type="EMDB" id="EMD-43305"/>
<dbReference type="EMDB" id="EMD-43317"/>
<dbReference type="EMDB" id="EMD-43333"/>
<dbReference type="EMDB" id="EMD-43476"/>
<dbReference type="EMDB" id="EMD-43477"/>
<dbReference type="EMDB" id="EMD-43484"/>
<dbReference type="EMDB" id="EMD-6789"/>
<dbReference type="EMDB" id="EMD-6920"/>
<dbReference type="EMDB" id="EMD-6921"/>
<dbReference type="EMDB" id="EMD-6922"/>
<dbReference type="EMDB" id="EMD-8932"/>
<dbReference type="EMDB" id="EMD-8937"/>
<dbReference type="SMR" id="A0QSG0"/>
<dbReference type="IntAct" id="A0QSG0">
    <property type="interactions" value="2"/>
</dbReference>
<dbReference type="STRING" id="246196.MSMEG_1466"/>
<dbReference type="PaxDb" id="246196-MSMEI_1430"/>
<dbReference type="GeneID" id="93456308"/>
<dbReference type="KEGG" id="msb:LJ00_07325"/>
<dbReference type="KEGG" id="msg:MSMEI_1430"/>
<dbReference type="KEGG" id="msm:MSMEG_1466"/>
<dbReference type="PATRIC" id="fig|246196.19.peg.1451"/>
<dbReference type="eggNOG" id="COG0198">
    <property type="taxonomic scope" value="Bacteria"/>
</dbReference>
<dbReference type="OrthoDB" id="9807419at2"/>
<dbReference type="Proteomes" id="UP000000757">
    <property type="component" value="Chromosome"/>
</dbReference>
<dbReference type="Proteomes" id="UP000006158">
    <property type="component" value="Chromosome"/>
</dbReference>
<dbReference type="GO" id="GO:1990904">
    <property type="term" value="C:ribonucleoprotein complex"/>
    <property type="evidence" value="ECO:0007669"/>
    <property type="project" value="UniProtKB-KW"/>
</dbReference>
<dbReference type="GO" id="GO:0005840">
    <property type="term" value="C:ribosome"/>
    <property type="evidence" value="ECO:0007669"/>
    <property type="project" value="UniProtKB-KW"/>
</dbReference>
<dbReference type="GO" id="GO:0019843">
    <property type="term" value="F:rRNA binding"/>
    <property type="evidence" value="ECO:0007669"/>
    <property type="project" value="UniProtKB-UniRule"/>
</dbReference>
<dbReference type="GO" id="GO:0003735">
    <property type="term" value="F:structural constituent of ribosome"/>
    <property type="evidence" value="ECO:0007669"/>
    <property type="project" value="InterPro"/>
</dbReference>
<dbReference type="GO" id="GO:0006412">
    <property type="term" value="P:translation"/>
    <property type="evidence" value="ECO:0007669"/>
    <property type="project" value="UniProtKB-UniRule"/>
</dbReference>
<dbReference type="CDD" id="cd06089">
    <property type="entry name" value="KOW_RPL26"/>
    <property type="match status" value="1"/>
</dbReference>
<dbReference type="FunFam" id="2.30.30.30:FF:000004">
    <property type="entry name" value="50S ribosomal protein L24"/>
    <property type="match status" value="1"/>
</dbReference>
<dbReference type="Gene3D" id="2.30.30.30">
    <property type="match status" value="1"/>
</dbReference>
<dbReference type="HAMAP" id="MF_01326_B">
    <property type="entry name" value="Ribosomal_uL24_B"/>
    <property type="match status" value="1"/>
</dbReference>
<dbReference type="InterPro" id="IPR005824">
    <property type="entry name" value="KOW"/>
</dbReference>
<dbReference type="InterPro" id="IPR014722">
    <property type="entry name" value="Rib_uL2_dom2"/>
</dbReference>
<dbReference type="InterPro" id="IPR003256">
    <property type="entry name" value="Ribosomal_uL24"/>
</dbReference>
<dbReference type="InterPro" id="IPR005825">
    <property type="entry name" value="Ribosomal_uL24_CS"/>
</dbReference>
<dbReference type="InterPro" id="IPR041988">
    <property type="entry name" value="Ribosomal_uL24_KOW"/>
</dbReference>
<dbReference type="InterPro" id="IPR008991">
    <property type="entry name" value="Translation_prot_SH3-like_sf"/>
</dbReference>
<dbReference type="NCBIfam" id="TIGR01079">
    <property type="entry name" value="rplX_bact"/>
    <property type="match status" value="1"/>
</dbReference>
<dbReference type="PANTHER" id="PTHR12903">
    <property type="entry name" value="MITOCHONDRIAL RIBOSOMAL PROTEIN L24"/>
    <property type="match status" value="1"/>
</dbReference>
<dbReference type="Pfam" id="PF00467">
    <property type="entry name" value="KOW"/>
    <property type="match status" value="1"/>
</dbReference>
<dbReference type="Pfam" id="PF17136">
    <property type="entry name" value="ribosomal_L24"/>
    <property type="match status" value="1"/>
</dbReference>
<dbReference type="SMART" id="SM00739">
    <property type="entry name" value="KOW"/>
    <property type="match status" value="1"/>
</dbReference>
<dbReference type="SUPFAM" id="SSF50104">
    <property type="entry name" value="Translation proteins SH3-like domain"/>
    <property type="match status" value="1"/>
</dbReference>
<dbReference type="PROSITE" id="PS01108">
    <property type="entry name" value="RIBOSOMAL_L24"/>
    <property type="match status" value="1"/>
</dbReference>
<proteinExistence type="evidence at protein level"/>
<name>RL24_MYCS2</name>
<gene>
    <name evidence="1" type="primary">rplX</name>
    <name type="ordered locus">MSMEG_1466</name>
    <name type="ordered locus">MSMEI_1430</name>
</gene>
<protein>
    <recommendedName>
        <fullName evidence="1">Large ribosomal subunit protein uL24</fullName>
    </recommendedName>
    <alternativeName>
        <fullName evidence="2">50S ribosomal protein L24</fullName>
    </alternativeName>
</protein>
<organism>
    <name type="scientific">Mycolicibacterium smegmatis (strain ATCC 700084 / mc(2)155)</name>
    <name type="common">Mycobacterium smegmatis</name>
    <dbReference type="NCBI Taxonomy" id="246196"/>
    <lineage>
        <taxon>Bacteria</taxon>
        <taxon>Bacillati</taxon>
        <taxon>Actinomycetota</taxon>
        <taxon>Actinomycetes</taxon>
        <taxon>Mycobacteriales</taxon>
        <taxon>Mycobacteriaceae</taxon>
        <taxon>Mycolicibacterium</taxon>
    </lineage>
</organism>
<keyword id="KW-0002">3D-structure</keyword>
<keyword id="KW-1185">Reference proteome</keyword>
<keyword id="KW-0687">Ribonucleoprotein</keyword>
<keyword id="KW-0689">Ribosomal protein</keyword>
<keyword id="KW-0694">RNA-binding</keyword>
<keyword id="KW-0699">rRNA-binding</keyword>
<accession>A0QSG0</accession>
<accession>I7FGD5</accession>
<reference key="1">
    <citation type="submission" date="2006-10" db="EMBL/GenBank/DDBJ databases">
        <authorList>
            <person name="Fleischmann R.D."/>
            <person name="Dodson R.J."/>
            <person name="Haft D.H."/>
            <person name="Merkel J.S."/>
            <person name="Nelson W.C."/>
            <person name="Fraser C.M."/>
        </authorList>
    </citation>
    <scope>NUCLEOTIDE SEQUENCE [LARGE SCALE GENOMIC DNA]</scope>
    <source>
        <strain>ATCC 700084 / mc(2)155</strain>
    </source>
</reference>
<reference key="2">
    <citation type="journal article" date="2007" name="Genome Biol.">
        <title>Interrupted coding sequences in Mycobacterium smegmatis: authentic mutations or sequencing errors?</title>
        <authorList>
            <person name="Deshayes C."/>
            <person name="Perrodou E."/>
            <person name="Gallien S."/>
            <person name="Euphrasie D."/>
            <person name="Schaeffer C."/>
            <person name="Van-Dorsselaer A."/>
            <person name="Poch O."/>
            <person name="Lecompte O."/>
            <person name="Reyrat J.-M."/>
        </authorList>
    </citation>
    <scope>NUCLEOTIDE SEQUENCE [LARGE SCALE GENOMIC DNA]</scope>
    <source>
        <strain>ATCC 700084 / mc(2)155</strain>
    </source>
</reference>
<reference key="3">
    <citation type="journal article" date="2009" name="Genome Res.">
        <title>Ortho-proteogenomics: multiple proteomes investigation through orthology and a new MS-based protocol.</title>
        <authorList>
            <person name="Gallien S."/>
            <person name="Perrodou E."/>
            <person name="Carapito C."/>
            <person name="Deshayes C."/>
            <person name="Reyrat J.-M."/>
            <person name="Van Dorsselaer A."/>
            <person name="Poch O."/>
            <person name="Schaeffer C."/>
            <person name="Lecompte O."/>
        </authorList>
    </citation>
    <scope>NUCLEOTIDE SEQUENCE [LARGE SCALE GENOMIC DNA]</scope>
    <scope>IDENTIFICATION BY MASS SPECTROMETRY [LARGE SCALE ANALYSIS]</scope>
    <scope>IDENTIFICATION OF N-TERMINUS</scope>
    <source>
        <strain>ATCC 700084 / mc(2)155</strain>
    </source>
</reference>